<gene>
    <name type="primary">LYK3</name>
    <name type="ordered locus">At1g51940</name>
    <name type="ORF">T14L22.13</name>
</gene>
<sequence>MNLTFYIFFLSLLPSFSSSKPMNCSDTTRLCSSFLAFKPNQNQSFSVIQSMFDVLPQDITADISGGYFFIKKNCSCLTTTHQYTTNTTFTIRQNVGYVYNVTVSAYSGLAFPPNTTRAARAGAVVSVQLLCGCSSGLWNYLMSYVAMAGDSVQSLSSRFGVSMDRIEDVNGILNLDNITAGDLLYIPLDSVPGEPYETSKINPPAPSPAPASSLANGNISDDQVNHTAKSGSHVPYIWIVGGLGVVLALLVLCILVCICLRSSSCSSSEEDGNGHNFQILRKSGFFCGSGRYNCCRSGDFRQTNGETQVVAIPKALGDGMFEIEKPMVFTYEEIRAATDEFSDSNLLGHGNYGSVYFGLLREQEVAVKRMTATKTKEFAAEMKVLCKVHHSNLVELIGYAATVDELFVVYEYVRKGMLKSHLHDPQSKGNTPLSWIMRNQIALDAARGLEYIHEHTKTHYVHRDIKTSNILLDEAFRAKISDFGLAKLVEKTGEGEISVTKVVGTYGYLAPEYLSDGLATSKSDIYAFGVVLFEIISGREAVIRTEAIGTKNPERRPLASIMLAVLKNSPDSMNMSSLKEFVDPNMMDLYPHDCLFKIATLAKQCVDDDPILRPNMKQVVISLSQILLSSIEWEATLAGNSQVFSGLVQGR</sequence>
<comment type="function">
    <text evidence="1">Putative Lysin motif (LysM) receptor kinase that may recognize microbe-derived N-acetylglucosamine (NAG)-containing ligands.</text>
</comment>
<comment type="subcellular location">
    <subcellularLocation>
        <location evidence="1">Cell membrane</location>
        <topology evidence="1">Single-pass membrane protein</topology>
    </subcellularLocation>
</comment>
<comment type="similarity">
    <text evidence="4">Belongs to the protein kinase superfamily. Ser/Thr protein kinase family.</text>
</comment>
<comment type="sequence caution" evidence="8">
    <conflict type="erroneous initiation">
        <sequence resource="EMBL-CDS" id="AAF99862"/>
    </conflict>
    <text>Truncated N-terminus.</text>
</comment>
<comment type="sequence caution" evidence="8">
    <conflict type="erroneous termination">
        <sequence resource="EMBL" id="BX816305"/>
    </conflict>
    <text>Truncated C-terminus.</text>
</comment>
<comment type="sequence caution" evidence="8">
    <conflict type="frameshift">
        <sequence resource="EMBL" id="BX816305"/>
    </conflict>
</comment>
<accession>F4IB81</accession>
<accession>Q9FZA7</accession>
<keyword id="KW-0067">ATP-binding</keyword>
<keyword id="KW-1003">Cell membrane</keyword>
<keyword id="KW-1015">Disulfide bond</keyword>
<keyword id="KW-0325">Glycoprotein</keyword>
<keyword id="KW-0418">Kinase</keyword>
<keyword id="KW-0472">Membrane</keyword>
<keyword id="KW-0547">Nucleotide-binding</keyword>
<keyword id="KW-0597">Phosphoprotein</keyword>
<keyword id="KW-0675">Receptor</keyword>
<keyword id="KW-1185">Reference proteome</keyword>
<keyword id="KW-0677">Repeat</keyword>
<keyword id="KW-0723">Serine/threonine-protein kinase</keyword>
<keyword id="KW-0732">Signal</keyword>
<keyword id="KW-0808">Transferase</keyword>
<keyword id="KW-0812">Transmembrane</keyword>
<keyword id="KW-1133">Transmembrane helix</keyword>
<evidence type="ECO:0000250" key="1"/>
<evidence type="ECO:0000250" key="2">
    <source>
        <dbReference type="UniProtKB" id="O48814"/>
    </source>
</evidence>
<evidence type="ECO:0000255" key="3"/>
<evidence type="ECO:0000255" key="4">
    <source>
        <dbReference type="PROSITE-ProRule" id="PRU00159"/>
    </source>
</evidence>
<evidence type="ECO:0000255" key="5">
    <source>
        <dbReference type="PROSITE-ProRule" id="PRU01118"/>
    </source>
</evidence>
<evidence type="ECO:0000255" key="6">
    <source>
        <dbReference type="PROSITE-ProRule" id="PRU10027"/>
    </source>
</evidence>
<evidence type="ECO:0000256" key="7">
    <source>
        <dbReference type="SAM" id="MobiDB-lite"/>
    </source>
</evidence>
<evidence type="ECO:0000305" key="8"/>
<name>LYK3_ARATH</name>
<protein>
    <recommendedName>
        <fullName>LysM domain receptor-like kinase 3</fullName>
        <shortName>LysM-containing receptor-like kinase 3</shortName>
        <ecNumber>2.7.11.-</ecNumber>
    </recommendedName>
</protein>
<dbReference type="EC" id="2.7.11.-"/>
<dbReference type="EMBL" id="AC015448">
    <property type="protein sequence ID" value="AAF99862.1"/>
    <property type="status" value="ALT_INIT"/>
    <property type="molecule type" value="Genomic_DNA"/>
</dbReference>
<dbReference type="EMBL" id="CP002684">
    <property type="protein sequence ID" value="AEE32737.1"/>
    <property type="molecule type" value="Genomic_DNA"/>
</dbReference>
<dbReference type="EMBL" id="BX816305">
    <property type="status" value="NOT_ANNOTATED_CDS"/>
    <property type="molecule type" value="mRNA"/>
</dbReference>
<dbReference type="PIR" id="G96558">
    <property type="entry name" value="G96558"/>
</dbReference>
<dbReference type="RefSeq" id="NP_175606.2">
    <property type="nucleotide sequence ID" value="NM_104075.4"/>
</dbReference>
<dbReference type="SMR" id="F4IB81"/>
<dbReference type="FunCoup" id="F4IB81">
    <property type="interactions" value="537"/>
</dbReference>
<dbReference type="STRING" id="3702.F4IB81"/>
<dbReference type="GlyCosmos" id="F4IB81">
    <property type="glycosylation" value="10 sites, No reported glycans"/>
</dbReference>
<dbReference type="GlyGen" id="F4IB81">
    <property type="glycosylation" value="11 sites"/>
</dbReference>
<dbReference type="iPTMnet" id="F4IB81"/>
<dbReference type="PaxDb" id="3702-AT1G51940.1"/>
<dbReference type="ProteomicsDB" id="238534"/>
<dbReference type="EnsemblPlants" id="AT1G51940.1">
    <property type="protein sequence ID" value="AT1G51940.1"/>
    <property type="gene ID" value="AT1G51940"/>
</dbReference>
<dbReference type="GeneID" id="841622"/>
<dbReference type="Gramene" id="AT1G51940.1">
    <property type="protein sequence ID" value="AT1G51940.1"/>
    <property type="gene ID" value="AT1G51940"/>
</dbReference>
<dbReference type="KEGG" id="ath:AT1G51940"/>
<dbReference type="Araport" id="AT1G51940"/>
<dbReference type="TAIR" id="AT1G51940">
    <property type="gene designation" value="LYK3"/>
</dbReference>
<dbReference type="eggNOG" id="ENOG502QR6F">
    <property type="taxonomic scope" value="Eukaryota"/>
</dbReference>
<dbReference type="HOGENOM" id="CLU_000288_99_2_1"/>
<dbReference type="InParanoid" id="F4IB81"/>
<dbReference type="OMA" id="VSHKFHI"/>
<dbReference type="PRO" id="PR:F4IB81"/>
<dbReference type="Proteomes" id="UP000006548">
    <property type="component" value="Chromosome 1"/>
</dbReference>
<dbReference type="ExpressionAtlas" id="F4IB81">
    <property type="expression patterns" value="baseline and differential"/>
</dbReference>
<dbReference type="GO" id="GO:0005886">
    <property type="term" value="C:plasma membrane"/>
    <property type="evidence" value="ECO:0000314"/>
    <property type="project" value="TAIR"/>
</dbReference>
<dbReference type="GO" id="GO:0005524">
    <property type="term" value="F:ATP binding"/>
    <property type="evidence" value="ECO:0007669"/>
    <property type="project" value="UniProtKB-KW"/>
</dbReference>
<dbReference type="GO" id="GO:0004674">
    <property type="term" value="F:protein serine/threonine kinase activity"/>
    <property type="evidence" value="ECO:0007669"/>
    <property type="project" value="UniProtKB-KW"/>
</dbReference>
<dbReference type="GO" id="GO:0019199">
    <property type="term" value="F:transmembrane receptor protein kinase activity"/>
    <property type="evidence" value="ECO:0007669"/>
    <property type="project" value="InterPro"/>
</dbReference>
<dbReference type="GO" id="GO:0009738">
    <property type="term" value="P:abscisic acid-activated signaling pathway"/>
    <property type="evidence" value="ECO:0000315"/>
    <property type="project" value="TAIR"/>
</dbReference>
<dbReference type="GO" id="GO:0006952">
    <property type="term" value="P:defense response"/>
    <property type="evidence" value="ECO:0000315"/>
    <property type="project" value="TAIR"/>
</dbReference>
<dbReference type="GO" id="GO:0050832">
    <property type="term" value="P:defense response to fungus"/>
    <property type="evidence" value="ECO:0000315"/>
    <property type="project" value="TAIR"/>
</dbReference>
<dbReference type="GO" id="GO:0045087">
    <property type="term" value="P:innate immune response"/>
    <property type="evidence" value="ECO:0000315"/>
    <property type="project" value="TAIR"/>
</dbReference>
<dbReference type="GO" id="GO:0031348">
    <property type="term" value="P:negative regulation of defense response"/>
    <property type="evidence" value="ECO:0000315"/>
    <property type="project" value="TAIR"/>
</dbReference>
<dbReference type="GO" id="GO:0009789">
    <property type="term" value="P:positive regulation of abscisic acid-activated signaling pathway"/>
    <property type="evidence" value="ECO:0000315"/>
    <property type="project" value="TAIR"/>
</dbReference>
<dbReference type="GO" id="GO:0009737">
    <property type="term" value="P:response to abscisic acid"/>
    <property type="evidence" value="ECO:0000315"/>
    <property type="project" value="TAIR"/>
</dbReference>
<dbReference type="CDD" id="cd00118">
    <property type="entry name" value="LysM"/>
    <property type="match status" value="1"/>
</dbReference>
<dbReference type="FunFam" id="3.30.200.20:FF:000526">
    <property type="entry name" value="Kinase family protein"/>
    <property type="match status" value="1"/>
</dbReference>
<dbReference type="FunFam" id="1.10.510.10:FF:000468">
    <property type="entry name" value="PTI1-like tyrosine-protein kinase 3"/>
    <property type="match status" value="1"/>
</dbReference>
<dbReference type="Gene3D" id="3.10.350.10">
    <property type="entry name" value="LysM domain"/>
    <property type="match status" value="1"/>
</dbReference>
<dbReference type="Gene3D" id="3.30.200.20">
    <property type="entry name" value="Phosphorylase Kinase, domain 1"/>
    <property type="match status" value="1"/>
</dbReference>
<dbReference type="Gene3D" id="1.10.510.10">
    <property type="entry name" value="Transferase(Phosphotransferase) domain 1"/>
    <property type="match status" value="1"/>
</dbReference>
<dbReference type="InterPro" id="IPR044812">
    <property type="entry name" value="CERK1/LYK3-like"/>
</dbReference>
<dbReference type="InterPro" id="IPR011009">
    <property type="entry name" value="Kinase-like_dom_sf"/>
</dbReference>
<dbReference type="InterPro" id="IPR018392">
    <property type="entry name" value="LysM_dom"/>
</dbReference>
<dbReference type="InterPro" id="IPR036779">
    <property type="entry name" value="LysM_dom_sf"/>
</dbReference>
<dbReference type="InterPro" id="IPR000719">
    <property type="entry name" value="Prot_kinase_dom"/>
</dbReference>
<dbReference type="InterPro" id="IPR017441">
    <property type="entry name" value="Protein_kinase_ATP_BS"/>
</dbReference>
<dbReference type="InterPro" id="IPR001245">
    <property type="entry name" value="Ser-Thr/Tyr_kinase_cat_dom"/>
</dbReference>
<dbReference type="InterPro" id="IPR008271">
    <property type="entry name" value="Ser/Thr_kinase_AS"/>
</dbReference>
<dbReference type="PANTHER" id="PTHR46204">
    <property type="entry name" value="CHITIN ELICITOR RECEPTOR KINASE 1-RELATED"/>
    <property type="match status" value="1"/>
</dbReference>
<dbReference type="PANTHER" id="PTHR46204:SF10">
    <property type="entry name" value="LYSM DOMAIN RECEPTOR-LIKE KINASE 3"/>
    <property type="match status" value="1"/>
</dbReference>
<dbReference type="Pfam" id="PF01476">
    <property type="entry name" value="LysM"/>
    <property type="match status" value="1"/>
</dbReference>
<dbReference type="Pfam" id="PF07714">
    <property type="entry name" value="PK_Tyr_Ser-Thr"/>
    <property type="match status" value="1"/>
</dbReference>
<dbReference type="SMART" id="SM00257">
    <property type="entry name" value="LysM"/>
    <property type="match status" value="1"/>
</dbReference>
<dbReference type="SMART" id="SM00220">
    <property type="entry name" value="S_TKc"/>
    <property type="match status" value="1"/>
</dbReference>
<dbReference type="SUPFAM" id="SSF54106">
    <property type="entry name" value="LysM domain"/>
    <property type="match status" value="1"/>
</dbReference>
<dbReference type="SUPFAM" id="SSF56112">
    <property type="entry name" value="Protein kinase-like (PK-like)"/>
    <property type="match status" value="1"/>
</dbReference>
<dbReference type="PROSITE" id="PS51782">
    <property type="entry name" value="LYSM"/>
    <property type="match status" value="1"/>
</dbReference>
<dbReference type="PROSITE" id="PS00107">
    <property type="entry name" value="PROTEIN_KINASE_ATP"/>
    <property type="match status" value="1"/>
</dbReference>
<dbReference type="PROSITE" id="PS50011">
    <property type="entry name" value="PROTEIN_KINASE_DOM"/>
    <property type="match status" value="1"/>
</dbReference>
<dbReference type="PROSITE" id="PS00108">
    <property type="entry name" value="PROTEIN_KINASE_ST"/>
    <property type="match status" value="1"/>
</dbReference>
<reference key="1">
    <citation type="journal article" date="2000" name="Nature">
        <title>Sequence and analysis of chromosome 1 of the plant Arabidopsis thaliana.</title>
        <authorList>
            <person name="Theologis A."/>
            <person name="Ecker J.R."/>
            <person name="Palm C.J."/>
            <person name="Federspiel N.A."/>
            <person name="Kaul S."/>
            <person name="White O."/>
            <person name="Alonso J."/>
            <person name="Altafi H."/>
            <person name="Araujo R."/>
            <person name="Bowman C.L."/>
            <person name="Brooks S.Y."/>
            <person name="Buehler E."/>
            <person name="Chan A."/>
            <person name="Chao Q."/>
            <person name="Chen H."/>
            <person name="Cheuk R.F."/>
            <person name="Chin C.W."/>
            <person name="Chung M.K."/>
            <person name="Conn L."/>
            <person name="Conway A.B."/>
            <person name="Conway A.R."/>
            <person name="Creasy T.H."/>
            <person name="Dewar K."/>
            <person name="Dunn P."/>
            <person name="Etgu P."/>
            <person name="Feldblyum T.V."/>
            <person name="Feng J.-D."/>
            <person name="Fong B."/>
            <person name="Fujii C.Y."/>
            <person name="Gill J.E."/>
            <person name="Goldsmith A.D."/>
            <person name="Haas B."/>
            <person name="Hansen N.F."/>
            <person name="Hughes B."/>
            <person name="Huizar L."/>
            <person name="Hunter J.L."/>
            <person name="Jenkins J."/>
            <person name="Johnson-Hopson C."/>
            <person name="Khan S."/>
            <person name="Khaykin E."/>
            <person name="Kim C.J."/>
            <person name="Koo H.L."/>
            <person name="Kremenetskaia I."/>
            <person name="Kurtz D.B."/>
            <person name="Kwan A."/>
            <person name="Lam B."/>
            <person name="Langin-Hooper S."/>
            <person name="Lee A."/>
            <person name="Lee J.M."/>
            <person name="Lenz C.A."/>
            <person name="Li J.H."/>
            <person name="Li Y.-P."/>
            <person name="Lin X."/>
            <person name="Liu S.X."/>
            <person name="Liu Z.A."/>
            <person name="Luros J.S."/>
            <person name="Maiti R."/>
            <person name="Marziali A."/>
            <person name="Militscher J."/>
            <person name="Miranda M."/>
            <person name="Nguyen M."/>
            <person name="Nierman W.C."/>
            <person name="Osborne B.I."/>
            <person name="Pai G."/>
            <person name="Peterson J."/>
            <person name="Pham P.K."/>
            <person name="Rizzo M."/>
            <person name="Rooney T."/>
            <person name="Rowley D."/>
            <person name="Sakano H."/>
            <person name="Salzberg S.L."/>
            <person name="Schwartz J.R."/>
            <person name="Shinn P."/>
            <person name="Southwick A.M."/>
            <person name="Sun H."/>
            <person name="Tallon L.J."/>
            <person name="Tambunga G."/>
            <person name="Toriumi M.J."/>
            <person name="Town C.D."/>
            <person name="Utterback T."/>
            <person name="Van Aken S."/>
            <person name="Vaysberg M."/>
            <person name="Vysotskaia V.S."/>
            <person name="Walker M."/>
            <person name="Wu D."/>
            <person name="Yu G."/>
            <person name="Fraser C.M."/>
            <person name="Venter J.C."/>
            <person name="Davis R.W."/>
        </authorList>
    </citation>
    <scope>NUCLEOTIDE SEQUENCE [LARGE SCALE GENOMIC DNA]</scope>
    <source>
        <strain>cv. Columbia</strain>
    </source>
</reference>
<reference key="2">
    <citation type="journal article" date="2017" name="Plant J.">
        <title>Araport11: a complete reannotation of the Arabidopsis thaliana reference genome.</title>
        <authorList>
            <person name="Cheng C.Y."/>
            <person name="Krishnakumar V."/>
            <person name="Chan A.P."/>
            <person name="Thibaud-Nissen F."/>
            <person name="Schobel S."/>
            <person name="Town C.D."/>
        </authorList>
    </citation>
    <scope>GENOME REANNOTATION</scope>
    <source>
        <strain>cv. Columbia</strain>
    </source>
</reference>
<reference key="3">
    <citation type="journal article" date="2004" name="Genome Res.">
        <title>Whole genome sequence comparisons and 'full-length' cDNA sequences: a combined approach to evaluate and improve Arabidopsis genome annotation.</title>
        <authorList>
            <person name="Castelli V."/>
            <person name="Aury J.-M."/>
            <person name="Jaillon O."/>
            <person name="Wincker P."/>
            <person name="Clepet C."/>
            <person name="Menard M."/>
            <person name="Cruaud C."/>
            <person name="Quetier F."/>
            <person name="Scarpelli C."/>
            <person name="Schaechter V."/>
            <person name="Temple G."/>
            <person name="Caboche M."/>
            <person name="Weissenbach J."/>
            <person name="Salanoubat M."/>
        </authorList>
    </citation>
    <scope>NUCLEOTIDE SEQUENCE [LARGE SCALE MRNA]</scope>
    <source>
        <strain>cv. Columbia</strain>
    </source>
</reference>
<proteinExistence type="evidence at transcript level"/>
<organism>
    <name type="scientific">Arabidopsis thaliana</name>
    <name type="common">Mouse-ear cress</name>
    <dbReference type="NCBI Taxonomy" id="3702"/>
    <lineage>
        <taxon>Eukaryota</taxon>
        <taxon>Viridiplantae</taxon>
        <taxon>Streptophyta</taxon>
        <taxon>Embryophyta</taxon>
        <taxon>Tracheophyta</taxon>
        <taxon>Spermatophyta</taxon>
        <taxon>Magnoliopsida</taxon>
        <taxon>eudicotyledons</taxon>
        <taxon>Gunneridae</taxon>
        <taxon>Pentapetalae</taxon>
        <taxon>rosids</taxon>
        <taxon>malvids</taxon>
        <taxon>Brassicales</taxon>
        <taxon>Brassicaceae</taxon>
        <taxon>Camelineae</taxon>
        <taxon>Arabidopsis</taxon>
    </lineage>
</organism>
<feature type="signal peptide" evidence="3">
    <location>
        <begin position="1"/>
        <end position="19"/>
    </location>
</feature>
<feature type="chain" id="PRO_0000420829" description="LysM domain receptor-like kinase 3">
    <location>
        <begin position="20"/>
        <end position="651"/>
    </location>
</feature>
<feature type="topological domain" description="Extracellular" evidence="3">
    <location>
        <begin position="20"/>
        <end position="236"/>
    </location>
</feature>
<feature type="transmembrane region" description="Helical" evidence="3">
    <location>
        <begin position="237"/>
        <end position="257"/>
    </location>
</feature>
<feature type="topological domain" description="Cytoplasmic" evidence="3">
    <location>
        <begin position="258"/>
        <end position="651"/>
    </location>
</feature>
<feature type="domain" description="LysM" evidence="5">
    <location>
        <begin position="142"/>
        <end position="186"/>
    </location>
</feature>
<feature type="domain" description="Protein kinase" evidence="4">
    <location>
        <begin position="341"/>
        <end position="628"/>
    </location>
</feature>
<feature type="region of interest" description="Disordered" evidence="7">
    <location>
        <begin position="196"/>
        <end position="216"/>
    </location>
</feature>
<feature type="active site" description="Proton acceptor" evidence="4 6">
    <location>
        <position position="464"/>
    </location>
</feature>
<feature type="binding site" evidence="4">
    <location>
        <begin position="347"/>
        <end position="355"/>
    </location>
    <ligand>
        <name>ATP</name>
        <dbReference type="ChEBI" id="CHEBI:30616"/>
    </ligand>
</feature>
<feature type="binding site" evidence="4">
    <location>
        <position position="368"/>
    </location>
    <ligand>
        <name>ATP</name>
        <dbReference type="ChEBI" id="CHEBI:30616"/>
    </ligand>
</feature>
<feature type="modified residue" description="Phosphothreonine" evidence="2">
    <location>
        <position position="330"/>
    </location>
</feature>
<feature type="modified residue" description="Phosphotyrosine" evidence="2">
    <location>
        <position position="410"/>
    </location>
</feature>
<feature type="modified residue" description="Phosphoserine" evidence="2">
    <location>
        <position position="468"/>
    </location>
</feature>
<feature type="modified residue" description="Phosphothreonine" evidence="2">
    <location>
        <position position="500"/>
    </location>
</feature>
<feature type="modified residue" description="Phosphothreonine" evidence="2">
    <location>
        <position position="505"/>
    </location>
</feature>
<feature type="modified residue" description="Phosphotyrosine" evidence="2">
    <location>
        <position position="513"/>
    </location>
</feature>
<feature type="glycosylation site" description="N-linked (GlcNAc...) asparagine" evidence="3">
    <location>
        <position position="2"/>
    </location>
</feature>
<feature type="glycosylation site" description="N-linked (GlcNAc...) asparagine" evidence="3">
    <location>
        <position position="23"/>
    </location>
</feature>
<feature type="glycosylation site" description="N-linked (GlcNAc...) asparagine" evidence="3">
    <location>
        <position position="42"/>
    </location>
</feature>
<feature type="glycosylation site" description="N-linked (GlcNAc...) asparagine" evidence="3">
    <location>
        <position position="73"/>
    </location>
</feature>
<feature type="glycosylation site" description="N-linked (GlcNAc...) asparagine" evidence="3">
    <location>
        <position position="86"/>
    </location>
</feature>
<feature type="glycosylation site" description="N-linked (GlcNAc...) asparagine" evidence="3">
    <location>
        <position position="100"/>
    </location>
</feature>
<feature type="glycosylation site" description="N-linked (GlcNAc...) asparagine" evidence="3">
    <location>
        <position position="114"/>
    </location>
</feature>
<feature type="glycosylation site" description="N-linked (GlcNAc...) asparagine" evidence="3">
    <location>
        <position position="177"/>
    </location>
</feature>
<feature type="glycosylation site" description="N-linked (GlcNAc...) asparagine" evidence="3">
    <location>
        <position position="218"/>
    </location>
</feature>
<feature type="glycosylation site" description="N-linked (GlcNAc...) asparagine" evidence="3">
    <location>
        <position position="225"/>
    </location>
</feature>
<feature type="disulfide bond" evidence="1">
    <location>
        <begin position="24"/>
        <end position="76"/>
    </location>
</feature>
<feature type="disulfide bond" evidence="1">
    <location>
        <begin position="31"/>
        <end position="133"/>
    </location>
</feature>
<feature type="disulfide bond" evidence="1">
    <location>
        <begin position="74"/>
        <end position="131"/>
    </location>
</feature>